<feature type="chain" id="PRO_0000181475" description="Large ribosomal subunit protein bL25">
    <location>
        <begin position="1"/>
        <end position="97"/>
    </location>
</feature>
<dbReference type="EMBL" id="AE016826">
    <property type="protein sequence ID" value="AAO26863.1"/>
    <property type="molecule type" value="Genomic_DNA"/>
</dbReference>
<dbReference type="RefSeq" id="WP_011091264.1">
    <property type="nucleotide sequence ID" value="NC_004545.1"/>
</dbReference>
<dbReference type="SMR" id="Q89AV5"/>
<dbReference type="STRING" id="224915.bbp_129"/>
<dbReference type="KEGG" id="bab:bbp_129"/>
<dbReference type="eggNOG" id="COG1825">
    <property type="taxonomic scope" value="Bacteria"/>
</dbReference>
<dbReference type="HOGENOM" id="CLU_137946_0_0_6"/>
<dbReference type="OrthoDB" id="9806411at2"/>
<dbReference type="Proteomes" id="UP000000601">
    <property type="component" value="Chromosome"/>
</dbReference>
<dbReference type="GO" id="GO:1990904">
    <property type="term" value="C:ribonucleoprotein complex"/>
    <property type="evidence" value="ECO:0007669"/>
    <property type="project" value="UniProtKB-KW"/>
</dbReference>
<dbReference type="GO" id="GO:0005840">
    <property type="term" value="C:ribosome"/>
    <property type="evidence" value="ECO:0007669"/>
    <property type="project" value="UniProtKB-KW"/>
</dbReference>
<dbReference type="GO" id="GO:0008097">
    <property type="term" value="F:5S rRNA binding"/>
    <property type="evidence" value="ECO:0007669"/>
    <property type="project" value="InterPro"/>
</dbReference>
<dbReference type="GO" id="GO:0003735">
    <property type="term" value="F:structural constituent of ribosome"/>
    <property type="evidence" value="ECO:0007669"/>
    <property type="project" value="InterPro"/>
</dbReference>
<dbReference type="GO" id="GO:0006412">
    <property type="term" value="P:translation"/>
    <property type="evidence" value="ECO:0007669"/>
    <property type="project" value="UniProtKB-UniRule"/>
</dbReference>
<dbReference type="CDD" id="cd00495">
    <property type="entry name" value="Ribosomal_L25_TL5_CTC"/>
    <property type="match status" value="1"/>
</dbReference>
<dbReference type="Gene3D" id="2.40.240.10">
    <property type="entry name" value="Ribosomal Protein L25, Chain P"/>
    <property type="match status" value="1"/>
</dbReference>
<dbReference type="HAMAP" id="MF_01336">
    <property type="entry name" value="Ribosomal_bL25"/>
    <property type="match status" value="1"/>
</dbReference>
<dbReference type="InterPro" id="IPR020056">
    <property type="entry name" value="Rbsml_bL25/Gln-tRNA_synth_N"/>
</dbReference>
<dbReference type="InterPro" id="IPR011035">
    <property type="entry name" value="Ribosomal_bL25/Gln-tRNA_synth"/>
</dbReference>
<dbReference type="InterPro" id="IPR020055">
    <property type="entry name" value="Ribosomal_bL25_short"/>
</dbReference>
<dbReference type="InterPro" id="IPR029751">
    <property type="entry name" value="Ribosomal_L25_dom"/>
</dbReference>
<dbReference type="NCBIfam" id="NF004612">
    <property type="entry name" value="PRK05943.1"/>
    <property type="match status" value="1"/>
</dbReference>
<dbReference type="Pfam" id="PF01386">
    <property type="entry name" value="Ribosomal_L25p"/>
    <property type="match status" value="1"/>
</dbReference>
<dbReference type="SUPFAM" id="SSF50715">
    <property type="entry name" value="Ribosomal protein L25-like"/>
    <property type="match status" value="1"/>
</dbReference>
<reference key="1">
    <citation type="journal article" date="2003" name="Proc. Natl. Acad. Sci. U.S.A.">
        <title>Reductive genome evolution in Buchnera aphidicola.</title>
        <authorList>
            <person name="van Ham R.C.H.J."/>
            <person name="Kamerbeek J."/>
            <person name="Palacios C."/>
            <person name="Rausell C."/>
            <person name="Abascal F."/>
            <person name="Bastolla U."/>
            <person name="Fernandez J.M."/>
            <person name="Jimenez L."/>
            <person name="Postigo M."/>
            <person name="Silva F.J."/>
            <person name="Tamames J."/>
            <person name="Viguera E."/>
            <person name="Latorre A."/>
            <person name="Valencia A."/>
            <person name="Moran F."/>
            <person name="Moya A."/>
        </authorList>
    </citation>
    <scope>NUCLEOTIDE SEQUENCE [LARGE SCALE GENOMIC DNA]</scope>
    <source>
        <strain>Bp</strain>
    </source>
</reference>
<comment type="function">
    <text evidence="1">This is one of the proteins that binds to the 5S RNA in the ribosome where it forms part of the central protuberance.</text>
</comment>
<comment type="subunit">
    <text evidence="1">Part of the 50S ribosomal subunit; part of the 5S rRNA/L5/L18/L25 subcomplex. Contacts the 5S rRNA. Binds to the 5S rRNA independently of L5 and L18.</text>
</comment>
<comment type="similarity">
    <text evidence="1">Belongs to the bacterial ribosomal protein bL25 family.</text>
</comment>
<gene>
    <name evidence="1" type="primary">rplY</name>
    <name type="ordered locus">bbp_129</name>
</gene>
<keyword id="KW-1185">Reference proteome</keyword>
<keyword id="KW-0687">Ribonucleoprotein</keyword>
<keyword id="KW-0689">Ribosomal protein</keyword>
<keyword id="KW-0694">RNA-binding</keyword>
<keyword id="KW-0699">rRNA-binding</keyword>
<accession>Q89AV5</accession>
<evidence type="ECO:0000255" key="1">
    <source>
        <dbReference type="HAMAP-Rule" id="MF_01336"/>
    </source>
</evidence>
<evidence type="ECO:0000305" key="2"/>
<sequence>MLTIYGISRTKCGKKASRRLRLQNKFPAIIHVSLISNISIELSQNDFINIEMKNSDFYKSEVILIVDKVKYIVKIQEIQRHAFKSKILHIDFLKVSV</sequence>
<proteinExistence type="inferred from homology"/>
<protein>
    <recommendedName>
        <fullName evidence="1">Large ribosomal subunit protein bL25</fullName>
    </recommendedName>
    <alternativeName>
        <fullName evidence="2">50S ribosomal protein L25</fullName>
    </alternativeName>
</protein>
<organism>
    <name type="scientific">Buchnera aphidicola subsp. Baizongia pistaciae (strain Bp)</name>
    <dbReference type="NCBI Taxonomy" id="224915"/>
    <lineage>
        <taxon>Bacteria</taxon>
        <taxon>Pseudomonadati</taxon>
        <taxon>Pseudomonadota</taxon>
        <taxon>Gammaproteobacteria</taxon>
        <taxon>Enterobacterales</taxon>
        <taxon>Erwiniaceae</taxon>
        <taxon>Buchnera</taxon>
    </lineage>
</organism>
<name>RL25_BUCBP</name>